<dbReference type="EC" id="2.7.11.1"/>
<dbReference type="EMBL" id="AB018598">
    <property type="protein sequence ID" value="BAA33886.1"/>
    <property type="molecule type" value="mRNA"/>
</dbReference>
<dbReference type="EMBL" id="Z70756">
    <property type="protein sequence ID" value="CAA94790.2"/>
    <property type="molecule type" value="Genomic_DNA"/>
</dbReference>
<dbReference type="EMBL" id="Z70756">
    <property type="protein sequence ID" value="CAC42337.1"/>
    <property type="molecule type" value="Genomic_DNA"/>
</dbReference>
<dbReference type="PIR" id="T24588">
    <property type="entry name" value="T24588"/>
</dbReference>
<dbReference type="PIR" id="T37320">
    <property type="entry name" value="T37320"/>
</dbReference>
<dbReference type="RefSeq" id="NP_001024110.1">
    <property type="nucleotide sequence ID" value="NM_001028939.2"/>
</dbReference>
<dbReference type="BioGRID" id="44389">
    <property type="interactions" value="5"/>
</dbReference>
<dbReference type="FunCoup" id="Q22258">
    <property type="interactions" value="368"/>
</dbReference>
<dbReference type="IntAct" id="Q22258">
    <property type="interactions" value="4"/>
</dbReference>
<dbReference type="MINT" id="Q22258"/>
<dbReference type="STRING" id="6239.T06E4.3a.1"/>
<dbReference type="PaxDb" id="6239-T06E4.3a"/>
<dbReference type="PeptideAtlas" id="Q22258"/>
<dbReference type="GeneID" id="179352"/>
<dbReference type="KEGG" id="cel:CELE_T06E4.3"/>
<dbReference type="AGR" id="WB:WBGene00000226"/>
<dbReference type="CTD" id="179352"/>
<dbReference type="WormBase" id="T06E4.3a">
    <property type="protein sequence ID" value="CE25103"/>
    <property type="gene ID" value="WBGene00000226"/>
    <property type="gene designation" value="atl-1"/>
</dbReference>
<dbReference type="eggNOG" id="KOG0890">
    <property type="taxonomic scope" value="Eukaryota"/>
</dbReference>
<dbReference type="HOGENOM" id="CLU_228436_0_0_1"/>
<dbReference type="InParanoid" id="Q22258"/>
<dbReference type="OMA" id="RISHMIK"/>
<dbReference type="OrthoDB" id="381190at2759"/>
<dbReference type="Reactome" id="R-CEL-5693607">
    <property type="pathway name" value="Processing of DNA double-strand break ends"/>
</dbReference>
<dbReference type="SignaLink" id="Q22258"/>
<dbReference type="PRO" id="PR:Q22258"/>
<dbReference type="Proteomes" id="UP000001940">
    <property type="component" value="Chromosome V"/>
</dbReference>
<dbReference type="Bgee" id="WBGene00000226">
    <property type="expression patterns" value="Expressed in germ line (C elegans) and 5 other cell types or tissues"/>
</dbReference>
<dbReference type="ExpressionAtlas" id="Q22258">
    <property type="expression patterns" value="baseline and differential"/>
</dbReference>
<dbReference type="GO" id="GO:0005694">
    <property type="term" value="C:chromosome"/>
    <property type="evidence" value="ECO:0000318"/>
    <property type="project" value="GO_Central"/>
</dbReference>
<dbReference type="GO" id="GO:0000794">
    <property type="term" value="C:condensed nuclear chromosome"/>
    <property type="evidence" value="ECO:0000304"/>
    <property type="project" value="WormBase"/>
</dbReference>
<dbReference type="GO" id="GO:0005634">
    <property type="term" value="C:nucleus"/>
    <property type="evidence" value="ECO:0000314"/>
    <property type="project" value="WormBase"/>
</dbReference>
<dbReference type="GO" id="GO:0016303">
    <property type="term" value="F:1-phosphatidylinositol-3-kinase activity"/>
    <property type="evidence" value="ECO:0000250"/>
    <property type="project" value="WormBase"/>
</dbReference>
<dbReference type="GO" id="GO:0005524">
    <property type="term" value="F:ATP binding"/>
    <property type="evidence" value="ECO:0007669"/>
    <property type="project" value="UniProtKB-KW"/>
</dbReference>
<dbReference type="GO" id="GO:0003677">
    <property type="term" value="F:DNA binding"/>
    <property type="evidence" value="ECO:0007669"/>
    <property type="project" value="UniProtKB-KW"/>
</dbReference>
<dbReference type="GO" id="GO:0106310">
    <property type="term" value="F:protein serine kinase activity"/>
    <property type="evidence" value="ECO:0007669"/>
    <property type="project" value="RHEA"/>
</dbReference>
<dbReference type="GO" id="GO:0004674">
    <property type="term" value="F:protein serine/threonine kinase activity"/>
    <property type="evidence" value="ECO:0000318"/>
    <property type="project" value="GO_Central"/>
</dbReference>
<dbReference type="GO" id="GO:0000077">
    <property type="term" value="P:DNA damage checkpoint signaling"/>
    <property type="evidence" value="ECO:0000315"/>
    <property type="project" value="WormBase"/>
</dbReference>
<dbReference type="GO" id="GO:0006281">
    <property type="term" value="P:DNA repair"/>
    <property type="evidence" value="ECO:0000318"/>
    <property type="project" value="GO_Central"/>
</dbReference>
<dbReference type="GO" id="GO:0009792">
    <property type="term" value="P:embryo development ending in birth or egg hatching"/>
    <property type="evidence" value="ECO:0000315"/>
    <property type="project" value="WormBase"/>
</dbReference>
<dbReference type="GO" id="GO:0045132">
    <property type="term" value="P:meiotic chromosome segregation"/>
    <property type="evidence" value="ECO:0000315"/>
    <property type="project" value="WormBase"/>
</dbReference>
<dbReference type="GO" id="GO:0000723">
    <property type="term" value="P:telomere maintenance"/>
    <property type="evidence" value="ECO:0000318"/>
    <property type="project" value="GO_Central"/>
</dbReference>
<dbReference type="CDD" id="cd05164">
    <property type="entry name" value="PIKKc"/>
    <property type="match status" value="1"/>
</dbReference>
<dbReference type="FunFam" id="1.10.1070.11:FF:000061">
    <property type="entry name" value="Serine/threonine-protein kinase ATR"/>
    <property type="match status" value="1"/>
</dbReference>
<dbReference type="FunFam" id="3.30.1010.10:FF:000058">
    <property type="entry name" value="Serine/threonine-protein kinase ATR"/>
    <property type="match status" value="1"/>
</dbReference>
<dbReference type="Gene3D" id="1.10.1070.11">
    <property type="entry name" value="Phosphatidylinositol 3-/4-kinase, catalytic domain"/>
    <property type="match status" value="1"/>
</dbReference>
<dbReference type="Gene3D" id="3.30.1010.10">
    <property type="entry name" value="Phosphatidylinositol 3-kinase Catalytic Subunit, Chain A, domain 4"/>
    <property type="match status" value="1"/>
</dbReference>
<dbReference type="InterPro" id="IPR050517">
    <property type="entry name" value="DDR_Repair_Kinase"/>
</dbReference>
<dbReference type="InterPro" id="IPR003152">
    <property type="entry name" value="FATC_dom"/>
</dbReference>
<dbReference type="InterPro" id="IPR011009">
    <property type="entry name" value="Kinase-like_dom_sf"/>
</dbReference>
<dbReference type="InterPro" id="IPR000403">
    <property type="entry name" value="PI3/4_kinase_cat_dom"/>
</dbReference>
<dbReference type="InterPro" id="IPR036940">
    <property type="entry name" value="PI3/4_kinase_cat_sf"/>
</dbReference>
<dbReference type="InterPro" id="IPR014009">
    <property type="entry name" value="PIK_FAT"/>
</dbReference>
<dbReference type="PANTHER" id="PTHR11139">
    <property type="entry name" value="ATAXIA TELANGIECTASIA MUTATED ATM -RELATED"/>
    <property type="match status" value="1"/>
</dbReference>
<dbReference type="PANTHER" id="PTHR11139:SF69">
    <property type="entry name" value="SERINE_THREONINE-PROTEIN KINASE ATR"/>
    <property type="match status" value="1"/>
</dbReference>
<dbReference type="Pfam" id="PF02260">
    <property type="entry name" value="FATC"/>
    <property type="match status" value="1"/>
</dbReference>
<dbReference type="Pfam" id="PF23593">
    <property type="entry name" value="HEAT_ATR"/>
    <property type="match status" value="1"/>
</dbReference>
<dbReference type="Pfam" id="PF00454">
    <property type="entry name" value="PI3_PI4_kinase"/>
    <property type="match status" value="1"/>
</dbReference>
<dbReference type="SMART" id="SM01343">
    <property type="entry name" value="FATC"/>
    <property type="match status" value="1"/>
</dbReference>
<dbReference type="SMART" id="SM00146">
    <property type="entry name" value="PI3Kc"/>
    <property type="match status" value="1"/>
</dbReference>
<dbReference type="SUPFAM" id="SSF56112">
    <property type="entry name" value="Protein kinase-like (PK-like)"/>
    <property type="match status" value="1"/>
</dbReference>
<dbReference type="PROSITE" id="PS51189">
    <property type="entry name" value="FAT"/>
    <property type="match status" value="1"/>
</dbReference>
<dbReference type="PROSITE" id="PS51190">
    <property type="entry name" value="FATC"/>
    <property type="match status" value="1"/>
</dbReference>
<dbReference type="PROSITE" id="PS50290">
    <property type="entry name" value="PI3_4_KINASE_3"/>
    <property type="match status" value="1"/>
</dbReference>
<evidence type="ECO:0000250" key="1"/>
<evidence type="ECO:0000250" key="2">
    <source>
        <dbReference type="UniProtKB" id="Q13535"/>
    </source>
</evidence>
<evidence type="ECO:0000255" key="3">
    <source>
        <dbReference type="PROSITE-ProRule" id="PRU00269"/>
    </source>
</evidence>
<evidence type="ECO:0000255" key="4">
    <source>
        <dbReference type="PROSITE-ProRule" id="PRU00534"/>
    </source>
</evidence>
<evidence type="ECO:0000255" key="5">
    <source>
        <dbReference type="PROSITE-ProRule" id="PRU00535"/>
    </source>
</evidence>
<evidence type="ECO:0000269" key="6">
    <source>
    </source>
</evidence>
<evidence type="ECO:0000269" key="7">
    <source>
    </source>
</evidence>
<evidence type="ECO:0000269" key="8">
    <source>
    </source>
</evidence>
<evidence type="ECO:0000305" key="9"/>
<evidence type="ECO:0000305" key="10">
    <source>
    </source>
</evidence>
<evidence type="ECO:0000312" key="11">
    <source>
        <dbReference type="WormBase" id="T06E4.3a"/>
    </source>
</evidence>
<organism>
    <name type="scientific">Caenorhabditis elegans</name>
    <dbReference type="NCBI Taxonomy" id="6239"/>
    <lineage>
        <taxon>Eukaryota</taxon>
        <taxon>Metazoa</taxon>
        <taxon>Ecdysozoa</taxon>
        <taxon>Nematoda</taxon>
        <taxon>Chromadorea</taxon>
        <taxon>Rhabditida</taxon>
        <taxon>Rhabditina</taxon>
        <taxon>Rhabditomorpha</taxon>
        <taxon>Rhabditoidea</taxon>
        <taxon>Rhabditidae</taxon>
        <taxon>Peloderinae</taxon>
        <taxon>Caenorhabditis</taxon>
    </lineage>
</organism>
<reference key="1">
    <citation type="journal article" date="2000" name="Mol. Gen. Genet.">
        <title>Characterization of Ce-atl-1, an ATM-like gene from Caenorhabditis elegans.</title>
        <authorList>
            <person name="Aoki H."/>
            <person name="Sato S."/>
            <person name="Takanami T."/>
            <person name="Ishihara T."/>
            <person name="Katsura I."/>
            <person name="Takahashi H."/>
            <person name="Higashitani A."/>
        </authorList>
    </citation>
    <scope>NUCLEOTIDE SEQUENCE [MRNA]</scope>
    <scope>DEVELOPMENTAL STAGE</scope>
</reference>
<reference key="2">
    <citation type="journal article" date="1998" name="Science">
        <title>Genome sequence of the nematode C. elegans: a platform for investigating biology.</title>
        <authorList>
            <consortium name="The C. elegans sequencing consortium"/>
        </authorList>
    </citation>
    <scope>NUCLEOTIDE SEQUENCE [LARGE SCALE GENOMIC DNA]</scope>
    <scope>ALTERNATIVE SPLICING</scope>
    <source>
        <strain>Bristol N2</strain>
    </source>
</reference>
<reference key="3">
    <citation type="journal article" date="2003" name="Curr. Biol.">
        <title>Differential activation of the DNA replication checkpoint contributes to asynchrony of cell division in C. elegans embryos.</title>
        <authorList>
            <person name="Brauchle M."/>
            <person name="Baumer K."/>
            <person name="Goenczy P."/>
        </authorList>
    </citation>
    <scope>FUNCTION</scope>
</reference>
<reference key="4">
    <citation type="journal article" date="2005" name="EMBO J.">
        <title>Distinct modes of ATR activation after replication stress and DNA double-strand breaks in Caenorhabditis elegans.</title>
        <authorList>
            <person name="Garcia-Muse T."/>
            <person name="Boulton S.J."/>
        </authorList>
    </citation>
    <scope>FUNCTION</scope>
    <scope>SUBCELLULAR LOCATION</scope>
</reference>
<reference key="5">
    <citation type="journal article" date="2006" name="EMBO J.">
        <title>A conserved pathway to activate BRCA1-dependent ubiquitylation at DNA damage sites.</title>
        <authorList>
            <person name="Polanowska J."/>
            <person name="Martin J.S."/>
            <person name="Garcia-Muse T."/>
            <person name="Petalcorin M.I.R."/>
            <person name="Boulton S.J."/>
        </authorList>
    </citation>
    <scope>FUNCTION</scope>
    <scope>DISRUPTION PHENOTYPE</scope>
</reference>
<proteinExistence type="evidence at transcript level"/>
<feature type="chain" id="PRO_0000225629" description="Serine/threonine-protein kinase ATR">
    <location>
        <begin position="1"/>
        <end position="2531"/>
    </location>
</feature>
<feature type="domain" description="FAT" evidence="4">
    <location>
        <begin position="1490"/>
        <end position="2067"/>
    </location>
</feature>
<feature type="domain" description="PI3K/PI4K catalytic" evidence="3">
    <location>
        <begin position="2192"/>
        <end position="2512"/>
    </location>
</feature>
<feature type="domain" description="FATC" evidence="4 5">
    <location>
        <begin position="2499"/>
        <end position="2531"/>
    </location>
</feature>
<feature type="region of interest" description="G-loop" evidence="3">
    <location>
        <begin position="2198"/>
        <end position="2204"/>
    </location>
</feature>
<feature type="region of interest" description="Catalytic loop" evidence="3">
    <location>
        <begin position="2368"/>
        <end position="2376"/>
    </location>
</feature>
<feature type="region of interest" description="Activation loop" evidence="3">
    <location>
        <begin position="2387"/>
        <end position="2411"/>
    </location>
</feature>
<accession>Q22258</accession>
<accession>Q9Y061</accession>
<gene>
    <name evidence="11" type="primary">atl-1</name>
    <name evidence="11" type="ORF">T06E4.3</name>
</gene>
<keyword id="KW-0067">ATP-binding</keyword>
<keyword id="KW-0227">DNA damage</keyword>
<keyword id="KW-0234">DNA repair</keyword>
<keyword id="KW-0238">DNA-binding</keyword>
<keyword id="KW-0418">Kinase</keyword>
<keyword id="KW-0464">Manganese</keyword>
<keyword id="KW-0547">Nucleotide-binding</keyword>
<keyword id="KW-0539">Nucleus</keyword>
<keyword id="KW-0597">Phosphoprotein</keyword>
<keyword id="KW-1185">Reference proteome</keyword>
<keyword id="KW-0677">Repeat</keyword>
<keyword id="KW-0723">Serine/threonine-protein kinase</keyword>
<keyword id="KW-0808">Transferase</keyword>
<comment type="function">
    <text evidence="2 7 8 10">Serine/threonine protein kinase which activates checkpoint signaling upon genotoxic stresses such as ionizing radiation (IR), ultraviolet light (UV), or DNA replication stalling, thereby acting as a DNA damage sensor (By similarity). Recognizes the substrate consensus sequence [ST]-Q (By similarity). Phosphorylates various proteins, which collectively inhibits DNA replication and mitosis and promotes DNA repair and recombination (By similarity). Prevents mitotic catastrophe by functioning in the S-phase checkpoint and cooperating with atm-1 in the checkpoint response to double-strand breaks (DSBs) after ionizing radiation (IR) to induce cell cycle arrest or apoptosis via the cep-1/p53 pathway (PubMed:12747829, PubMed:16319925). In response to ionizing radiation, probably required for the association between the brc-1-brd-1 heterodimer and rad-51 and let-70 in order to activate E3-ubiquitin ligase activity of the heterodimer and induce ubiquitination at DNA damage sites (PubMed:16628214).</text>
</comment>
<comment type="catalytic activity">
    <reaction>
        <text>L-seryl-[protein] + ATP = O-phospho-L-seryl-[protein] + ADP + H(+)</text>
        <dbReference type="Rhea" id="RHEA:17989"/>
        <dbReference type="Rhea" id="RHEA-COMP:9863"/>
        <dbReference type="Rhea" id="RHEA-COMP:11604"/>
        <dbReference type="ChEBI" id="CHEBI:15378"/>
        <dbReference type="ChEBI" id="CHEBI:29999"/>
        <dbReference type="ChEBI" id="CHEBI:30616"/>
        <dbReference type="ChEBI" id="CHEBI:83421"/>
        <dbReference type="ChEBI" id="CHEBI:456216"/>
        <dbReference type="EC" id="2.7.11.1"/>
    </reaction>
</comment>
<comment type="catalytic activity">
    <reaction>
        <text>L-threonyl-[protein] + ATP = O-phospho-L-threonyl-[protein] + ADP + H(+)</text>
        <dbReference type="Rhea" id="RHEA:46608"/>
        <dbReference type="Rhea" id="RHEA-COMP:11060"/>
        <dbReference type="Rhea" id="RHEA-COMP:11605"/>
        <dbReference type="ChEBI" id="CHEBI:15378"/>
        <dbReference type="ChEBI" id="CHEBI:30013"/>
        <dbReference type="ChEBI" id="CHEBI:30616"/>
        <dbReference type="ChEBI" id="CHEBI:61977"/>
        <dbReference type="ChEBI" id="CHEBI:456216"/>
        <dbReference type="EC" id="2.7.11.1"/>
    </reaction>
</comment>
<comment type="cofactor">
    <cofactor evidence="1">
        <name>Mn(2+)</name>
        <dbReference type="ChEBI" id="CHEBI:29035"/>
    </cofactor>
</comment>
<comment type="subcellular location">
    <subcellularLocation>
        <location evidence="7">Nucleus</location>
    </subcellularLocation>
    <text>Recruited to stalled replication forks by rpa-1-coated single-stranded DNA. Recruited to processed double-strand breaks in a rpa-1 and mre-11-dependent manner.</text>
</comment>
<comment type="developmental stage">
    <text evidence="6">Expressed at all larval stages and is expressed at higher level in the adult.</text>
</comment>
<comment type="disruption phenotype">
    <text evidence="8">RNAi-mediated knockdown results in DNA damage repair defects following ionizing radiation with reduced ubiquitination at DNA damage sites.</text>
</comment>
<comment type="similarity">
    <text evidence="9">Belongs to the PI3/PI4-kinase family. ATM subfamily.</text>
</comment>
<protein>
    <recommendedName>
        <fullName>Serine/threonine-protein kinase ATR</fullName>
        <ecNumber>2.7.11.1</ecNumber>
    </recommendedName>
    <alternativeName>
        <fullName>ATM-like protein 1</fullName>
    </alternativeName>
    <alternativeName>
        <fullName>Ataxia telangiectasia and Rad3-related protein homolog</fullName>
        <shortName>ATR homolog</shortName>
    </alternativeName>
    <alternativeName>
        <fullName>Ce-atl-1</fullName>
    </alternativeName>
</protein>
<sequence length="2531" mass="292612">MNIDKDVSALLCTAKKYVTQKEFNRQKMKFLLDDITKLLSKSFVSRIEQLDENEFMEKIMILQSITFTLHLITEKQELSSEEKIRLFQSVIASMCAFEDEELAKCFDRILSVLMISVTKQDPRETIYFLQGLLEVVKYCDVEPSSSLPQLITPEIASAISLGASGFFRYHLKWNIISTLFGENAGECVHFDELVLFWPHCRSQLEDKLKNDCSMTENCLRAGLTILKYKKLHNSILDQALFIDELFATFNSLTAKKSTNHMTFPKLLNEIQHFLQDHGKVLIMHKELRQKPVQWLIIYLELIDDANDKFGLLENFSLLLLDLSTNHDIHEFPARLCMTASEICMRRIKHSIQSTHTDCLADYLDILASLLKLARIQKLDIFQCFATEIEAHHSLNNPLWPRILRSLLSVQNPHCQQFCKKFVPSIDKLWITLLNGESSRATLNSLVIVTASCPFANNNDEGVKQIIPFLLIPCFQDFRDRVGSKWDNFRFIGLPKSEPSELINLERFTTVLERSTSESTKLRAVNCALQLEKKTGKYINLVAEMSLAVFSKSQTDRIANSFEPLILFLTDNLQLINDFITILIAKLCEKQEFYSELTILKYFKTLQKLFCLAANGRNSCKKCGEECFVDPDSKENVKIDYESLSGLIKGIVARRNTFSQELIREFLQTSRVMLLHVDSKGIASSFTSIIKALDIGFSENANAYFRVWELVCCRSEATVEKKLQMYIPLIGRSFALLGDDAALKVHGFLSNVLSARLSSTVKATLFASSFAHSVLKNCEIDWNVSYTWKTQFSQCLIKAPVGTCEEALQIMFKRYSTIFTRCFLNRLFFDASSAGAQKPSYDEHRIREITRCYLSHVLSDFNFPNQKITFNMIRPSLLYWSLLSSARGINSKLTLSVIDFICQEMSAASVSMSSISPNPSDIRIVMIQRKSLITETFAQLVQFLAFENNRNTTSFWKFCSDHCDFKDEDIRTVISSYRKQVFMHLLLVSAREFLNPRNPSMIVEQLRATYENIKKGEKFMISTAIETRNEGIEFLFIFRTYFTNDQYFLTREATAESFRILLQNMKQDFFDTNWYIILMTLRQIPLNLDSTQSSWISFIEQINYSILRSNIWRILTDISRIENNDILIEKVWNRLSYDMVIDKISTDAMIKRVFWLIPLEVEKRIDLKFEISKSRQIEDVLEFIRMFPQYPSVQFADNLASKIERKTVYKEELPKLIGSLSRILPQCHSKREQNKIIKILQKLPIICSDLPDHNFIRWDTRFKFFCEPRQLTQAVLEDCAGIVEVMTGTSKIEYVDRTMCEIYKFFNPNEASPEMKSTLDGIKNMYAKMICSQKPEPSMIEQKTIDELSLGGSRRESFSRWLTVIILKCAEMSEDAPLSSLASIAHVDDTRFLSKLAMRFILTVIHMERDSVTQWILSTFEEALTNTNHRRLTNSDRGPASFVFYVFDFIYSYSSSEELRKKKKIWEKVISFWKSMMSWTFKDENGHGQPLIVKVAETFGMEKRCILWLEMFMEQKRKTSTEIESETEAAYYFTLMNLYGRIHELNGVRGAYARLSRIQIDHVYGKISMREAFGDFNSAACFARMTGKGKPFNSTEAIQKLIDELNCLEYSQIERNEQEDYLNSLKTLSQWVNIDNDIGPSPHIFSRNIEYWATESTILKMIRNDERDEIVNNAIENAKSKVIERLSECAIGGSCSYEIATPFLVELQKLNEIVELKNVSNDELSAFNSDFWKNIQKRTDDSEQKISILEPILRVRRSMLDIRMQSMTGRDKENIRSRIVEVHLQSARIARLTGCFERAQLSLINAKKVLPFENKIVLEEAKLQLQTSDELNGMSLLDSIISKNFGDLHTIYTDTQQSVNLDVQKSAKLKIEHYQEETKNLFSSVQMLRISHMIKAGNTIGFDKVYHETTQLLQCFAHSGVMYEAAWLLDYLSNYKERSKHVLPLLKAYKEVAKYEKNQVLQARAVERMTSLWLSNTRKISTHISSVPKLPEGQISDLRQNIKSMNREIQTALEHIGWRAFYPAYAVLARHIDHQDEEVTRTIKQIMKQLILRMPHQCMWQSAYLLRQNIASVKEKYMEVLTEVKRKAPCYVTLIDQYDYASGVFNTVSGKVESDDCKLSEKVDGLKTMFRDKKYDPKELVMNRRVDCDCKILSGIMVPVRSVIDESVHDTEIRDDGFEESCHLPDRYLIHDFSDKVKVLHSNTKPVIIKLTTKTGRIVRLICKKDDDLSKDYHFTKMVEMCNDLLMKDEQTRIQKMTATTYSVIPLGKQGGIIEFMEGVTSFYETLDKLMGMTSGEWLEKLKFWNTHMKPMGKEERTKYFREVACKNTPVVMGKWFRIQYPEAGQWFASRKLFAKSTAVMSVIGYIFGLGDRHTKNLMVHTTGKCIHVDFDMIFNKGETLGTPELVPFRLTQNMINGMGEVALDGEFRTVCEQALRVFRENSYEIEKYIADLPNLVADFPSNKRAPKDFDMSEAKRLVSGRLRGQIMTAKLYRSNPISHPMQVSQLASSLIELATSEEKLSEMYLGWMATL</sequence>
<name>ATR_CAEEL</name>